<dbReference type="EMBL" id="CP000539">
    <property type="protein sequence ID" value="ABM40647.1"/>
    <property type="molecule type" value="Genomic_DNA"/>
</dbReference>
<dbReference type="SMR" id="A1W322"/>
<dbReference type="STRING" id="232721.Ajs_0395"/>
<dbReference type="KEGG" id="ajs:Ajs_0395"/>
<dbReference type="eggNOG" id="COG0096">
    <property type="taxonomic scope" value="Bacteria"/>
</dbReference>
<dbReference type="HOGENOM" id="CLU_098428_0_0_4"/>
<dbReference type="Proteomes" id="UP000000645">
    <property type="component" value="Chromosome"/>
</dbReference>
<dbReference type="GO" id="GO:1990904">
    <property type="term" value="C:ribonucleoprotein complex"/>
    <property type="evidence" value="ECO:0007669"/>
    <property type="project" value="UniProtKB-KW"/>
</dbReference>
<dbReference type="GO" id="GO:0005840">
    <property type="term" value="C:ribosome"/>
    <property type="evidence" value="ECO:0007669"/>
    <property type="project" value="UniProtKB-KW"/>
</dbReference>
<dbReference type="GO" id="GO:0019843">
    <property type="term" value="F:rRNA binding"/>
    <property type="evidence" value="ECO:0007669"/>
    <property type="project" value="UniProtKB-UniRule"/>
</dbReference>
<dbReference type="GO" id="GO:0003735">
    <property type="term" value="F:structural constituent of ribosome"/>
    <property type="evidence" value="ECO:0007669"/>
    <property type="project" value="InterPro"/>
</dbReference>
<dbReference type="GO" id="GO:0006412">
    <property type="term" value="P:translation"/>
    <property type="evidence" value="ECO:0007669"/>
    <property type="project" value="UniProtKB-UniRule"/>
</dbReference>
<dbReference type="FunFam" id="3.30.1370.30:FF:000002">
    <property type="entry name" value="30S ribosomal protein S8"/>
    <property type="match status" value="1"/>
</dbReference>
<dbReference type="FunFam" id="3.30.1490.10:FF:000001">
    <property type="entry name" value="30S ribosomal protein S8"/>
    <property type="match status" value="1"/>
</dbReference>
<dbReference type="Gene3D" id="3.30.1370.30">
    <property type="match status" value="1"/>
</dbReference>
<dbReference type="Gene3D" id="3.30.1490.10">
    <property type="match status" value="1"/>
</dbReference>
<dbReference type="HAMAP" id="MF_01302_B">
    <property type="entry name" value="Ribosomal_uS8_B"/>
    <property type="match status" value="1"/>
</dbReference>
<dbReference type="InterPro" id="IPR000630">
    <property type="entry name" value="Ribosomal_uS8"/>
</dbReference>
<dbReference type="InterPro" id="IPR047863">
    <property type="entry name" value="Ribosomal_uS8_CS"/>
</dbReference>
<dbReference type="InterPro" id="IPR035987">
    <property type="entry name" value="Ribosomal_uS8_sf"/>
</dbReference>
<dbReference type="NCBIfam" id="NF001109">
    <property type="entry name" value="PRK00136.1"/>
    <property type="match status" value="1"/>
</dbReference>
<dbReference type="PANTHER" id="PTHR11758">
    <property type="entry name" value="40S RIBOSOMAL PROTEIN S15A"/>
    <property type="match status" value="1"/>
</dbReference>
<dbReference type="Pfam" id="PF00410">
    <property type="entry name" value="Ribosomal_S8"/>
    <property type="match status" value="1"/>
</dbReference>
<dbReference type="SUPFAM" id="SSF56047">
    <property type="entry name" value="Ribosomal protein S8"/>
    <property type="match status" value="1"/>
</dbReference>
<dbReference type="PROSITE" id="PS00053">
    <property type="entry name" value="RIBOSOMAL_S8"/>
    <property type="match status" value="1"/>
</dbReference>
<accession>A1W322</accession>
<reference key="1">
    <citation type="submission" date="2006-12" db="EMBL/GenBank/DDBJ databases">
        <title>Complete sequence of chromosome 1 of Acidovorax sp. JS42.</title>
        <authorList>
            <person name="Copeland A."/>
            <person name="Lucas S."/>
            <person name="Lapidus A."/>
            <person name="Barry K."/>
            <person name="Detter J.C."/>
            <person name="Glavina del Rio T."/>
            <person name="Dalin E."/>
            <person name="Tice H."/>
            <person name="Pitluck S."/>
            <person name="Chertkov O."/>
            <person name="Brettin T."/>
            <person name="Bruce D."/>
            <person name="Han C."/>
            <person name="Tapia R."/>
            <person name="Gilna P."/>
            <person name="Schmutz J."/>
            <person name="Larimer F."/>
            <person name="Land M."/>
            <person name="Hauser L."/>
            <person name="Kyrpides N."/>
            <person name="Kim E."/>
            <person name="Stahl D."/>
            <person name="Richardson P."/>
        </authorList>
    </citation>
    <scope>NUCLEOTIDE SEQUENCE [LARGE SCALE GENOMIC DNA]</scope>
    <source>
        <strain>JS42</strain>
    </source>
</reference>
<name>RS8_ACISJ</name>
<proteinExistence type="inferred from homology"/>
<protein>
    <recommendedName>
        <fullName evidence="1">Small ribosomal subunit protein uS8</fullName>
    </recommendedName>
    <alternativeName>
        <fullName evidence="2">30S ribosomal protein S8</fullName>
    </alternativeName>
</protein>
<sequence length="131" mass="14075">MSMSDPIADLLTRIRNAQMVSKATVSVPSSKVKVAIAQVLKDEGYIDGFEVKSESGKTELEITLKYYAGRPVIERIERVSRPGLRVYKGCGSIPQVMNGLGVAIVTTPKGVMTDRKARATGVGGEVLCYVA</sequence>
<keyword id="KW-0687">Ribonucleoprotein</keyword>
<keyword id="KW-0689">Ribosomal protein</keyword>
<keyword id="KW-0694">RNA-binding</keyword>
<keyword id="KW-0699">rRNA-binding</keyword>
<feature type="chain" id="PRO_0000290793" description="Small ribosomal subunit protein uS8">
    <location>
        <begin position="1"/>
        <end position="131"/>
    </location>
</feature>
<organism>
    <name type="scientific">Acidovorax sp. (strain JS42)</name>
    <dbReference type="NCBI Taxonomy" id="232721"/>
    <lineage>
        <taxon>Bacteria</taxon>
        <taxon>Pseudomonadati</taxon>
        <taxon>Pseudomonadota</taxon>
        <taxon>Betaproteobacteria</taxon>
        <taxon>Burkholderiales</taxon>
        <taxon>Comamonadaceae</taxon>
        <taxon>Acidovorax</taxon>
    </lineage>
</organism>
<comment type="function">
    <text evidence="1">One of the primary rRNA binding proteins, it binds directly to 16S rRNA central domain where it helps coordinate assembly of the platform of the 30S subunit.</text>
</comment>
<comment type="subunit">
    <text evidence="1">Part of the 30S ribosomal subunit. Contacts proteins S5 and S12.</text>
</comment>
<comment type="similarity">
    <text evidence="1">Belongs to the universal ribosomal protein uS8 family.</text>
</comment>
<evidence type="ECO:0000255" key="1">
    <source>
        <dbReference type="HAMAP-Rule" id="MF_01302"/>
    </source>
</evidence>
<evidence type="ECO:0000305" key="2"/>
<gene>
    <name evidence="1" type="primary">rpsH</name>
    <name type="ordered locus">Ajs_0395</name>
</gene>